<accession>A4WGZ8</accession>
<feature type="chain" id="PRO_0000369973" description="Serine hydroxymethyltransferase">
    <location>
        <begin position="1"/>
        <end position="429"/>
    </location>
</feature>
<feature type="binding site" evidence="1">
    <location>
        <begin position="120"/>
        <end position="122"/>
    </location>
    <ligand>
        <name>(6S)-5,6,7,8-tetrahydrofolate</name>
        <dbReference type="ChEBI" id="CHEBI:57453"/>
    </ligand>
</feature>
<feature type="site" description="Plays an important role in substrate specificity" evidence="1">
    <location>
        <position position="225"/>
    </location>
</feature>
<feature type="modified residue" description="N6-(pyridoxal phosphate)lysine" evidence="1">
    <location>
        <position position="226"/>
    </location>
</feature>
<sequence length="429" mass="47384">MLPKELEEIIDVVLVHNNWRRRETINLIASENVMSPLAELVYLNDMAGRYAEGTVGNRYYQGTKYVDLIEDVLTKRFAKALGATYVDVRPVSGTVANLATYFALVPEGGVVASLPVKYGGHISHNTVGGLKALRLKMVELPWDLDRFNIDVDRARKVIEEAKPNLVILGGSLYLFPHPIREIAEIAKASGAYVLHDSAHVFGLIIGGVFPNPLKEGAHVITTSTHKTFPGPQGGLIAAVVEDKVNDLQRAVFPVFTSNYHLHRYAATYVTLVEMEHFGAEYARRVVENARALAEALAEQGVPPVAEALGYTRTHQVAVDVSKFGGGDKVAAKLEEANIIVNKNALPWDKSVLKPSGIRLGVQEMTRFGMGKDEMREIAKFIARVLSGEDPAGVRRDVAEFRKAYLEIKYGFKIDRELVDKVFKSLSLYT</sequence>
<reference key="1">
    <citation type="submission" date="2007-04" db="EMBL/GenBank/DDBJ databases">
        <title>Complete sequence of Pyrobaculum arsenaticum DSM 13514.</title>
        <authorList>
            <consortium name="US DOE Joint Genome Institute"/>
            <person name="Copeland A."/>
            <person name="Lucas S."/>
            <person name="Lapidus A."/>
            <person name="Barry K."/>
            <person name="Glavina del Rio T."/>
            <person name="Dalin E."/>
            <person name="Tice H."/>
            <person name="Pitluck S."/>
            <person name="Chain P."/>
            <person name="Malfatti S."/>
            <person name="Shin M."/>
            <person name="Vergez L."/>
            <person name="Schmutz J."/>
            <person name="Larimer F."/>
            <person name="Land M."/>
            <person name="Hauser L."/>
            <person name="Kyrpides N."/>
            <person name="Mikhailova N."/>
            <person name="Cozen A.E."/>
            <person name="Fitz-Gibbon S.T."/>
            <person name="House C.H."/>
            <person name="Saltikov C."/>
            <person name="Lowe T.M."/>
            <person name="Richardson P."/>
        </authorList>
    </citation>
    <scope>NUCLEOTIDE SEQUENCE [LARGE SCALE GENOMIC DNA]</scope>
    <source>
        <strain>ATCC 700994 / DSM 13514 / JCM 11321 / PZ6</strain>
    </source>
</reference>
<protein>
    <recommendedName>
        <fullName evidence="1">Serine hydroxymethyltransferase</fullName>
        <shortName evidence="1">SHMT</shortName>
        <shortName evidence="1">Serine methylase</shortName>
        <ecNumber evidence="1">2.1.2.-</ecNumber>
    </recommendedName>
</protein>
<comment type="function">
    <text evidence="1">Catalyzes the reversible interconversion of serine and glycine with a modified folate serving as the one-carbon carrier. Also exhibits a pteridine-independent aldolase activity toward beta-hydroxyamino acids, producing glycine and aldehydes, via a retro-aldol mechanism.</text>
</comment>
<comment type="cofactor">
    <cofactor evidence="1">
        <name>pyridoxal 5'-phosphate</name>
        <dbReference type="ChEBI" id="CHEBI:597326"/>
    </cofactor>
</comment>
<comment type="pathway">
    <text evidence="1">Amino-acid biosynthesis; glycine biosynthesis; glycine from L-serine: step 1/1.</text>
</comment>
<comment type="subunit">
    <text evidence="1">Homodimer.</text>
</comment>
<comment type="subcellular location">
    <subcellularLocation>
        <location evidence="1">Cytoplasm</location>
    </subcellularLocation>
</comment>
<comment type="similarity">
    <text evidence="1">Belongs to the SHMT family.</text>
</comment>
<organism>
    <name type="scientific">Pyrobaculum arsenaticum (strain DSM 13514 / JCM 11321 / PZ6)</name>
    <dbReference type="NCBI Taxonomy" id="340102"/>
    <lineage>
        <taxon>Archaea</taxon>
        <taxon>Thermoproteota</taxon>
        <taxon>Thermoprotei</taxon>
        <taxon>Thermoproteales</taxon>
        <taxon>Thermoproteaceae</taxon>
        <taxon>Pyrobaculum</taxon>
    </lineage>
</organism>
<gene>
    <name evidence="1" type="primary">glyA</name>
    <name type="ordered locus">Pars_0048</name>
</gene>
<evidence type="ECO:0000255" key="1">
    <source>
        <dbReference type="HAMAP-Rule" id="MF_00051"/>
    </source>
</evidence>
<proteinExistence type="inferred from homology"/>
<name>GLYA_PYRAR</name>
<dbReference type="EC" id="2.1.2.-" evidence="1"/>
<dbReference type="EMBL" id="CP000660">
    <property type="protein sequence ID" value="ABP49665.1"/>
    <property type="molecule type" value="Genomic_DNA"/>
</dbReference>
<dbReference type="SMR" id="A4WGZ8"/>
<dbReference type="STRING" id="340102.Pars_0048"/>
<dbReference type="KEGG" id="pas:Pars_0048"/>
<dbReference type="HOGENOM" id="CLU_022477_2_1_2"/>
<dbReference type="OrthoDB" id="5821at2157"/>
<dbReference type="PhylomeDB" id="A4WGZ8"/>
<dbReference type="UniPathway" id="UPA00288">
    <property type="reaction ID" value="UER01023"/>
</dbReference>
<dbReference type="Proteomes" id="UP000001567">
    <property type="component" value="Chromosome"/>
</dbReference>
<dbReference type="GO" id="GO:0005737">
    <property type="term" value="C:cytoplasm"/>
    <property type="evidence" value="ECO:0007669"/>
    <property type="project" value="UniProtKB-SubCell"/>
</dbReference>
<dbReference type="GO" id="GO:0004372">
    <property type="term" value="F:glycine hydroxymethyltransferase activity"/>
    <property type="evidence" value="ECO:0007669"/>
    <property type="project" value="UniProtKB-UniRule"/>
</dbReference>
<dbReference type="GO" id="GO:0030170">
    <property type="term" value="F:pyridoxal phosphate binding"/>
    <property type="evidence" value="ECO:0007669"/>
    <property type="project" value="UniProtKB-UniRule"/>
</dbReference>
<dbReference type="GO" id="GO:0019264">
    <property type="term" value="P:glycine biosynthetic process from serine"/>
    <property type="evidence" value="ECO:0007669"/>
    <property type="project" value="UniProtKB-UniRule"/>
</dbReference>
<dbReference type="GO" id="GO:0035999">
    <property type="term" value="P:tetrahydrofolate interconversion"/>
    <property type="evidence" value="ECO:0007669"/>
    <property type="project" value="InterPro"/>
</dbReference>
<dbReference type="CDD" id="cd00378">
    <property type="entry name" value="SHMT"/>
    <property type="match status" value="1"/>
</dbReference>
<dbReference type="FunFam" id="3.40.640.10:FF:000101">
    <property type="entry name" value="Serine hydroxymethyltransferase"/>
    <property type="match status" value="1"/>
</dbReference>
<dbReference type="FunFam" id="3.90.1150.10:FF:000114">
    <property type="entry name" value="Serine hydroxymethyltransferase"/>
    <property type="match status" value="1"/>
</dbReference>
<dbReference type="Gene3D" id="3.90.1150.10">
    <property type="entry name" value="Aspartate Aminotransferase, domain 1"/>
    <property type="match status" value="1"/>
</dbReference>
<dbReference type="Gene3D" id="3.40.640.10">
    <property type="entry name" value="Type I PLP-dependent aspartate aminotransferase-like (Major domain)"/>
    <property type="match status" value="1"/>
</dbReference>
<dbReference type="HAMAP" id="MF_00051">
    <property type="entry name" value="SHMT"/>
    <property type="match status" value="1"/>
</dbReference>
<dbReference type="InterPro" id="IPR015424">
    <property type="entry name" value="PyrdxlP-dep_Trfase"/>
</dbReference>
<dbReference type="InterPro" id="IPR015421">
    <property type="entry name" value="PyrdxlP-dep_Trfase_major"/>
</dbReference>
<dbReference type="InterPro" id="IPR015422">
    <property type="entry name" value="PyrdxlP-dep_Trfase_small"/>
</dbReference>
<dbReference type="InterPro" id="IPR001085">
    <property type="entry name" value="Ser_HO-MeTrfase"/>
</dbReference>
<dbReference type="InterPro" id="IPR049943">
    <property type="entry name" value="Ser_HO-MeTrfase-like"/>
</dbReference>
<dbReference type="InterPro" id="IPR019798">
    <property type="entry name" value="Ser_HO-MeTrfase_PLP_BS"/>
</dbReference>
<dbReference type="InterPro" id="IPR039429">
    <property type="entry name" value="SHMT-like_dom"/>
</dbReference>
<dbReference type="NCBIfam" id="NF000586">
    <property type="entry name" value="PRK00011.1"/>
    <property type="match status" value="1"/>
</dbReference>
<dbReference type="PANTHER" id="PTHR11680">
    <property type="entry name" value="SERINE HYDROXYMETHYLTRANSFERASE"/>
    <property type="match status" value="1"/>
</dbReference>
<dbReference type="PANTHER" id="PTHR11680:SF35">
    <property type="entry name" value="SERINE HYDROXYMETHYLTRANSFERASE 1"/>
    <property type="match status" value="1"/>
</dbReference>
<dbReference type="Pfam" id="PF00464">
    <property type="entry name" value="SHMT"/>
    <property type="match status" value="1"/>
</dbReference>
<dbReference type="PIRSF" id="PIRSF000412">
    <property type="entry name" value="SHMT"/>
    <property type="match status" value="1"/>
</dbReference>
<dbReference type="SUPFAM" id="SSF53383">
    <property type="entry name" value="PLP-dependent transferases"/>
    <property type="match status" value="1"/>
</dbReference>
<dbReference type="PROSITE" id="PS00096">
    <property type="entry name" value="SHMT"/>
    <property type="match status" value="1"/>
</dbReference>
<keyword id="KW-0028">Amino-acid biosynthesis</keyword>
<keyword id="KW-0963">Cytoplasm</keyword>
<keyword id="KW-0554">One-carbon metabolism</keyword>
<keyword id="KW-0663">Pyridoxal phosphate</keyword>
<keyword id="KW-0808">Transferase</keyword>